<keyword id="KW-0067">ATP-binding</keyword>
<keyword id="KW-0347">Helicase</keyword>
<keyword id="KW-0378">Hydrolase</keyword>
<keyword id="KW-0547">Nucleotide-binding</keyword>
<keyword id="KW-0539">Nucleus</keyword>
<keyword id="KW-1185">Reference proteome</keyword>
<keyword id="KW-0690">Ribosome biogenesis</keyword>
<keyword id="KW-0694">RNA-binding</keyword>
<keyword id="KW-0698">rRNA processing</keyword>
<feature type="chain" id="PRO_0000232177" description="ATP-dependent RNA helicase DBP3">
    <location>
        <begin position="1"/>
        <end position="527"/>
    </location>
</feature>
<feature type="domain" description="Helicase ATP-binding" evidence="2">
    <location>
        <begin position="148"/>
        <end position="319"/>
    </location>
</feature>
<feature type="domain" description="Helicase C-terminal" evidence="3">
    <location>
        <begin position="348"/>
        <end position="497"/>
    </location>
</feature>
<feature type="region of interest" description="Disordered" evidence="4">
    <location>
        <begin position="1"/>
        <end position="89"/>
    </location>
</feature>
<feature type="short sequence motif" description="Q motif">
    <location>
        <begin position="119"/>
        <end position="145"/>
    </location>
</feature>
<feature type="short sequence motif" description="DEAD box">
    <location>
        <begin position="266"/>
        <end position="269"/>
    </location>
</feature>
<feature type="compositionally biased region" description="Basic residues" evidence="4">
    <location>
        <begin position="1"/>
        <end position="11"/>
    </location>
</feature>
<feature type="compositionally biased region" description="Basic and acidic residues" evidence="4">
    <location>
        <begin position="12"/>
        <end position="24"/>
    </location>
</feature>
<feature type="compositionally biased region" description="Basic residues" evidence="4">
    <location>
        <begin position="25"/>
        <end position="44"/>
    </location>
</feature>
<feature type="compositionally biased region" description="Basic and acidic residues" evidence="4">
    <location>
        <begin position="45"/>
        <end position="71"/>
    </location>
</feature>
<feature type="compositionally biased region" description="Polar residues" evidence="4">
    <location>
        <begin position="72"/>
        <end position="89"/>
    </location>
</feature>
<feature type="binding site" evidence="2">
    <location>
        <begin position="161"/>
        <end position="168"/>
    </location>
    <ligand>
        <name>ATP</name>
        <dbReference type="ChEBI" id="CHEBI:30616"/>
    </ligand>
</feature>
<accession>Q6BZ77</accession>
<protein>
    <recommendedName>
        <fullName>ATP-dependent RNA helicase DBP3</fullName>
        <ecNumber>3.6.4.13</ecNumber>
    </recommendedName>
</protein>
<name>DBP3_DEBHA</name>
<comment type="function">
    <text evidence="1">ATP-dependent RNA helicase required for 60S ribosomal subunit synthesis. Involved in efficient pre-rRNA processing, predominantly at site A3, which is necessary for the normal formation of 25S and 5.8S rRNAs (By similarity).</text>
</comment>
<comment type="catalytic activity">
    <reaction>
        <text>ATP + H2O = ADP + phosphate + H(+)</text>
        <dbReference type="Rhea" id="RHEA:13065"/>
        <dbReference type="ChEBI" id="CHEBI:15377"/>
        <dbReference type="ChEBI" id="CHEBI:15378"/>
        <dbReference type="ChEBI" id="CHEBI:30616"/>
        <dbReference type="ChEBI" id="CHEBI:43474"/>
        <dbReference type="ChEBI" id="CHEBI:456216"/>
        <dbReference type="EC" id="3.6.4.13"/>
    </reaction>
</comment>
<comment type="subcellular location">
    <subcellularLocation>
        <location evidence="1">Nucleus</location>
        <location evidence="1">Nucleolus</location>
    </subcellularLocation>
</comment>
<comment type="domain">
    <text>The Q motif is unique to and characteristic of the DEAD box family of RNA helicases and controls ATP binding and hydrolysis.</text>
</comment>
<comment type="similarity">
    <text evidence="5">Belongs to the DEAD box helicase family. DDX5/DBP2 subfamily.</text>
</comment>
<organism>
    <name type="scientific">Debaryomyces hansenii (strain ATCC 36239 / CBS 767 / BCRC 21394 / JCM 1990 / NBRC 0083 / IGC 2968)</name>
    <name type="common">Yeast</name>
    <name type="synonym">Torulaspora hansenii</name>
    <dbReference type="NCBI Taxonomy" id="284592"/>
    <lineage>
        <taxon>Eukaryota</taxon>
        <taxon>Fungi</taxon>
        <taxon>Dikarya</taxon>
        <taxon>Ascomycota</taxon>
        <taxon>Saccharomycotina</taxon>
        <taxon>Pichiomycetes</taxon>
        <taxon>Debaryomycetaceae</taxon>
        <taxon>Debaryomyces</taxon>
    </lineage>
</organism>
<reference key="1">
    <citation type="journal article" date="2004" name="Nature">
        <title>Genome evolution in yeasts.</title>
        <authorList>
            <person name="Dujon B."/>
            <person name="Sherman D."/>
            <person name="Fischer G."/>
            <person name="Durrens P."/>
            <person name="Casaregola S."/>
            <person name="Lafontaine I."/>
            <person name="de Montigny J."/>
            <person name="Marck C."/>
            <person name="Neuveglise C."/>
            <person name="Talla E."/>
            <person name="Goffard N."/>
            <person name="Frangeul L."/>
            <person name="Aigle M."/>
            <person name="Anthouard V."/>
            <person name="Babour A."/>
            <person name="Barbe V."/>
            <person name="Barnay S."/>
            <person name="Blanchin S."/>
            <person name="Beckerich J.-M."/>
            <person name="Beyne E."/>
            <person name="Bleykasten C."/>
            <person name="Boisrame A."/>
            <person name="Boyer J."/>
            <person name="Cattolico L."/>
            <person name="Confanioleri F."/>
            <person name="de Daruvar A."/>
            <person name="Despons L."/>
            <person name="Fabre E."/>
            <person name="Fairhead C."/>
            <person name="Ferry-Dumazet H."/>
            <person name="Groppi A."/>
            <person name="Hantraye F."/>
            <person name="Hennequin C."/>
            <person name="Jauniaux N."/>
            <person name="Joyet P."/>
            <person name="Kachouri R."/>
            <person name="Kerrest A."/>
            <person name="Koszul R."/>
            <person name="Lemaire M."/>
            <person name="Lesur I."/>
            <person name="Ma L."/>
            <person name="Muller H."/>
            <person name="Nicaud J.-M."/>
            <person name="Nikolski M."/>
            <person name="Oztas S."/>
            <person name="Ozier-Kalogeropoulos O."/>
            <person name="Pellenz S."/>
            <person name="Potier S."/>
            <person name="Richard G.-F."/>
            <person name="Straub M.-L."/>
            <person name="Suleau A."/>
            <person name="Swennen D."/>
            <person name="Tekaia F."/>
            <person name="Wesolowski-Louvel M."/>
            <person name="Westhof E."/>
            <person name="Wirth B."/>
            <person name="Zeniou-Meyer M."/>
            <person name="Zivanovic Y."/>
            <person name="Bolotin-Fukuhara M."/>
            <person name="Thierry A."/>
            <person name="Bouchier C."/>
            <person name="Caudron B."/>
            <person name="Scarpelli C."/>
            <person name="Gaillardin C."/>
            <person name="Weissenbach J."/>
            <person name="Wincker P."/>
            <person name="Souciet J.-L."/>
        </authorList>
    </citation>
    <scope>NUCLEOTIDE SEQUENCE [LARGE SCALE GENOMIC DNA]</scope>
    <source>
        <strain>ATCC 36239 / CBS 767 / BCRC 21394 / JCM 1990 / NBRC 0083 / IGC 2968</strain>
    </source>
</reference>
<dbReference type="EC" id="3.6.4.13"/>
<dbReference type="EMBL" id="CR382133">
    <property type="protein sequence ID" value="CAG84444.1"/>
    <property type="molecule type" value="Genomic_DNA"/>
</dbReference>
<dbReference type="RefSeq" id="XP_456492.1">
    <property type="nucleotide sequence ID" value="XM_456492.1"/>
</dbReference>
<dbReference type="SMR" id="Q6BZ77"/>
<dbReference type="FunCoup" id="Q6BZ77">
    <property type="interactions" value="440"/>
</dbReference>
<dbReference type="STRING" id="284592.Q6BZ77"/>
<dbReference type="GeneID" id="2899897"/>
<dbReference type="KEGG" id="dha:DEHA2A03454g"/>
<dbReference type="VEuPathDB" id="FungiDB:DEHA2A03454g"/>
<dbReference type="eggNOG" id="KOG0331">
    <property type="taxonomic scope" value="Eukaryota"/>
</dbReference>
<dbReference type="HOGENOM" id="CLU_003041_1_5_1"/>
<dbReference type="InParanoid" id="Q6BZ77"/>
<dbReference type="OMA" id="KKTHDMY"/>
<dbReference type="OrthoDB" id="196131at2759"/>
<dbReference type="Proteomes" id="UP000000599">
    <property type="component" value="Chromosome A"/>
</dbReference>
<dbReference type="GO" id="GO:0005730">
    <property type="term" value="C:nucleolus"/>
    <property type="evidence" value="ECO:0007669"/>
    <property type="project" value="UniProtKB-SubCell"/>
</dbReference>
<dbReference type="GO" id="GO:0030687">
    <property type="term" value="C:preribosome, large subunit precursor"/>
    <property type="evidence" value="ECO:0007669"/>
    <property type="project" value="EnsemblFungi"/>
</dbReference>
<dbReference type="GO" id="GO:0005524">
    <property type="term" value="F:ATP binding"/>
    <property type="evidence" value="ECO:0007669"/>
    <property type="project" value="UniProtKB-KW"/>
</dbReference>
<dbReference type="GO" id="GO:0016887">
    <property type="term" value="F:ATP hydrolysis activity"/>
    <property type="evidence" value="ECO:0007669"/>
    <property type="project" value="RHEA"/>
</dbReference>
<dbReference type="GO" id="GO:0003723">
    <property type="term" value="F:RNA binding"/>
    <property type="evidence" value="ECO:0007669"/>
    <property type="project" value="UniProtKB-KW"/>
</dbReference>
<dbReference type="GO" id="GO:0003724">
    <property type="term" value="F:RNA helicase activity"/>
    <property type="evidence" value="ECO:0007669"/>
    <property type="project" value="UniProtKB-EC"/>
</dbReference>
<dbReference type="GO" id="GO:0000464">
    <property type="term" value="P:endonucleolytic cleavage in ITS1 upstream of 5.8S rRNA from tricistronic rRNA transcript (SSU-rRNA, 5.8S rRNA, LSU-rRNA)"/>
    <property type="evidence" value="ECO:0007669"/>
    <property type="project" value="EnsemblFungi"/>
</dbReference>
<dbReference type="CDD" id="cd00268">
    <property type="entry name" value="DEADc"/>
    <property type="match status" value="1"/>
</dbReference>
<dbReference type="CDD" id="cd18787">
    <property type="entry name" value="SF2_C_DEAD"/>
    <property type="match status" value="1"/>
</dbReference>
<dbReference type="FunFam" id="3.40.50.300:FF:000008">
    <property type="entry name" value="ATP-dependent RNA helicase RhlB"/>
    <property type="match status" value="1"/>
</dbReference>
<dbReference type="Gene3D" id="3.40.50.300">
    <property type="entry name" value="P-loop containing nucleotide triphosphate hydrolases"/>
    <property type="match status" value="2"/>
</dbReference>
<dbReference type="InterPro" id="IPR011545">
    <property type="entry name" value="DEAD/DEAH_box_helicase_dom"/>
</dbReference>
<dbReference type="InterPro" id="IPR014001">
    <property type="entry name" value="Helicase_ATP-bd"/>
</dbReference>
<dbReference type="InterPro" id="IPR001650">
    <property type="entry name" value="Helicase_C-like"/>
</dbReference>
<dbReference type="InterPro" id="IPR027417">
    <property type="entry name" value="P-loop_NTPase"/>
</dbReference>
<dbReference type="InterPro" id="IPR000629">
    <property type="entry name" value="RNA-helicase_DEAD-box_CS"/>
</dbReference>
<dbReference type="PANTHER" id="PTHR47958">
    <property type="entry name" value="ATP-DEPENDENT RNA HELICASE DBP3"/>
    <property type="match status" value="1"/>
</dbReference>
<dbReference type="Pfam" id="PF00270">
    <property type="entry name" value="DEAD"/>
    <property type="match status" value="1"/>
</dbReference>
<dbReference type="Pfam" id="PF00271">
    <property type="entry name" value="Helicase_C"/>
    <property type="match status" value="1"/>
</dbReference>
<dbReference type="SMART" id="SM00487">
    <property type="entry name" value="DEXDc"/>
    <property type="match status" value="1"/>
</dbReference>
<dbReference type="SMART" id="SM00490">
    <property type="entry name" value="HELICc"/>
    <property type="match status" value="1"/>
</dbReference>
<dbReference type="SUPFAM" id="SSF52540">
    <property type="entry name" value="P-loop containing nucleoside triphosphate hydrolases"/>
    <property type="match status" value="1"/>
</dbReference>
<dbReference type="PROSITE" id="PS00039">
    <property type="entry name" value="DEAD_ATP_HELICASE"/>
    <property type="match status" value="1"/>
</dbReference>
<dbReference type="PROSITE" id="PS51192">
    <property type="entry name" value="HELICASE_ATP_BIND_1"/>
    <property type="match status" value="1"/>
</dbReference>
<dbReference type="PROSITE" id="PS51194">
    <property type="entry name" value="HELICASE_CTER"/>
    <property type="match status" value="1"/>
</dbReference>
<dbReference type="PROSITE" id="PS51195">
    <property type="entry name" value="Q_MOTIF"/>
    <property type="match status" value="1"/>
</dbReference>
<gene>
    <name type="primary">DBP3</name>
    <name type="ordered locus">DEHA2A03454g</name>
</gene>
<sequence>MSKDHKDKKRKHSDEATEEVEKKTKVSKKEKKDKKEKKEKKDKKEKKDKSEKKDKSEKKEKKEKKESEDVPTKSSAVVSTGYSQSPALTKLPQSEIDSFLQENEVTVEDPHNLGLRPLLGFDQIDLDSRIASVISKFPTPTPIQAVSWPYLLSGKDVIGVAETGSGKTFAFGVPAINNILTHDKKGLKVLCISPTRELALQIYDNLVDLTANTPLKCVAVYGGVSKHEQVSSLRNASVVVATPGRLIDLLNDGALSLDSIEYLVLDEADRMLEKGFEQDIKSVMQQTNHANRQTLMFTATWPKEVRELASTFMNSPVKVSIGDRNELSANKRITQIVEVIEPYDKEKKLLSLLRKYQSGSNKDDKVLIFALYKKEATRIENLLVRNSFKVSAVHGDLSQQQRTSALGAFKAGKTTLLLATDVAARGLDIPNVKVVINLTFPLTVEDYVHRIGRTGRAGQTGIAHTLFTEHEKHLSGALMNVLRGANQPVPDELLKFGGHTKKKAHSAYGAFFKDVDMTKTAKKIKFD</sequence>
<evidence type="ECO:0000250" key="1"/>
<evidence type="ECO:0000255" key="2">
    <source>
        <dbReference type="PROSITE-ProRule" id="PRU00541"/>
    </source>
</evidence>
<evidence type="ECO:0000255" key="3">
    <source>
        <dbReference type="PROSITE-ProRule" id="PRU00542"/>
    </source>
</evidence>
<evidence type="ECO:0000256" key="4">
    <source>
        <dbReference type="SAM" id="MobiDB-lite"/>
    </source>
</evidence>
<evidence type="ECO:0000305" key="5"/>
<proteinExistence type="inferred from homology"/>